<protein>
    <recommendedName>
        <fullName>Caspase-1</fullName>
        <shortName>CASP-1</shortName>
        <ecNumber evidence="2">3.4.22.36</ecNumber>
    </recommendedName>
    <alternativeName>
        <fullName>Interleukin-1 beta convertase</fullName>
        <shortName>IL-1BC</shortName>
    </alternativeName>
    <alternativeName>
        <fullName>Interleukin-1 beta-converting enzyme</fullName>
        <shortName>ICE</shortName>
        <shortName>IL-1 beta-converting enzyme</shortName>
    </alternativeName>
    <alternativeName>
        <fullName>p45</fullName>
    </alternativeName>
    <component>
        <recommendedName>
            <fullName evidence="2">Caspase-1 subunit p20</fullName>
        </recommendedName>
    </component>
    <component>
        <recommendedName>
            <fullName evidence="2">Caspase-1 subunit p10</fullName>
        </recommendedName>
    </component>
</protein>
<reference key="1">
    <citation type="journal article" date="1999" name="J. Interferon Cytokine Res.">
        <title>Molecular cloning of porcine interleukin-1beta converting enzyme and differential gene expression of IL-1beta converting enzyme, IL-1beta, and IL-18 in porcine alveolar macrophages.</title>
        <authorList>
            <person name="Muneta Y."/>
            <person name="Shimoji Y."/>
            <person name="Yokomizo Y."/>
            <person name="Mori Y."/>
        </authorList>
    </citation>
    <scope>NUCLEOTIDE SEQUENCE [MRNA]</scope>
</reference>
<name>CASP1_PIG</name>
<feature type="propeptide" id="PRO_0000004529" evidence="3">
    <location>
        <begin position="1"/>
        <end position="119"/>
    </location>
</feature>
<feature type="chain" id="PRO_0000004530" description="Caspase-1 subunit p20" evidence="2">
    <location>
        <begin position="120"/>
        <end position="297"/>
    </location>
</feature>
<feature type="propeptide" id="PRO_0000004531" evidence="3">
    <location>
        <begin position="298"/>
        <end position="316"/>
    </location>
</feature>
<feature type="chain" id="PRO_0000004532" description="Caspase-1 subunit p10" evidence="2">
    <location>
        <begin position="317"/>
        <end position="404"/>
    </location>
</feature>
<feature type="domain" description="CARD" evidence="4">
    <location>
        <begin position="1"/>
        <end position="91"/>
    </location>
</feature>
<feature type="region of interest" description="Disordered" evidence="5">
    <location>
        <begin position="111"/>
        <end position="132"/>
    </location>
</feature>
<feature type="active site" evidence="2">
    <location>
        <position position="237"/>
    </location>
</feature>
<feature type="active site" evidence="2">
    <location>
        <position position="285"/>
    </location>
</feature>
<feature type="modified residue" description="Phosphoserine" evidence="1">
    <location>
        <position position="302"/>
    </location>
</feature>
<organism>
    <name type="scientific">Sus scrofa</name>
    <name type="common">Pig</name>
    <dbReference type="NCBI Taxonomy" id="9823"/>
    <lineage>
        <taxon>Eukaryota</taxon>
        <taxon>Metazoa</taxon>
        <taxon>Chordata</taxon>
        <taxon>Craniata</taxon>
        <taxon>Vertebrata</taxon>
        <taxon>Euteleostomi</taxon>
        <taxon>Mammalia</taxon>
        <taxon>Eutheria</taxon>
        <taxon>Laurasiatheria</taxon>
        <taxon>Artiodactyla</taxon>
        <taxon>Suina</taxon>
        <taxon>Suidae</taxon>
        <taxon>Sus</taxon>
    </lineage>
</organism>
<keyword id="KW-0053">Apoptosis</keyword>
<keyword id="KW-1003">Cell membrane</keyword>
<keyword id="KW-0963">Cytoplasm</keyword>
<keyword id="KW-0378">Hydrolase</keyword>
<keyword id="KW-0472">Membrane</keyword>
<keyword id="KW-0597">Phosphoprotein</keyword>
<keyword id="KW-0645">Protease</keyword>
<keyword id="KW-1185">Reference proteome</keyword>
<keyword id="KW-0788">Thiol protease</keyword>
<keyword id="KW-0832">Ubl conjugation</keyword>
<keyword id="KW-0865">Zymogen</keyword>
<sequence>MADKVLKEKRRLFVRSVAMGTINGLLDELLETRVLNQEEVEIVRGENATVMDKARALIDSVIRKGPQACQICINHICGDDPHLAGVLELSTGSQSGKCLTVQESQAVVPPFPAPQTVQDNPVKPASSEPRGSLKLCPPDIAQRLWKEKSAEIYPIMGKSIRTRLALIICNTEFENLPRRDGADVDIRDMKILLEDLGYSVDVRENLTASDMAIELKAFAARPEHKSSDSTFLVLMSHGIQAGICGKKYSEEVPDVLEVNTVFQILNTLNCPSLKDKPKVIIIQACRGEKQGVVWIKDSVGPSGNSSLLAAEDFEYDAIKKAHIEKDFIAFCSSTPDNVSWRHPLLGSLFIIKLIKILQEHAWSCGLEEIFRKVRFSFELADGRAQMPTAERVTLTRSFYLFPGH</sequence>
<comment type="function">
    <text evidence="2">Thiol protease involved in a variety of inflammatory processes by proteolytically cleaving other proteins, such as the precursors of the inflammatory cytokines interleukin-1 beta (IL1B) and interleukin 18 (IL18) as well as the pyroptosis inducer Gasdermin-D (GSDMD), into active mature peptides. Plays a key role in cell immunity as an inflammatory response initiator: once activated through formation of an inflammasome complex, it initiates a pro-inflammatory response through the cleavage of the two inflammatory cytokines IL1B and IL18, releasing the mature cytokines which are involved in a variety of inflammatory processes. Cleaves a tetrapeptide after an Asp residue at position P1. Also initiates pyroptosis, a programmed lytic cell death pathway, through cleavage of GSDMD. In contrast to cleavage of interleukin IL1B, recognition and cleavage of GSDMD is not strictly dependent on the consensus cleavage site but depends on an exosite interface on CASP1 that recognizes and binds the Gasdermin-D, C-terminal (GSDMD-CT) part. Cleaves and activates CASP7 in response to bacterial infection, promoting plasma membrane repair. Upon inflammasome activation, during DNA virus infection but not RNA virus challenge, controls antiviral immunity through the cleavage of CGAS, rendering it inactive. In apoptotic cells, cleaves SPHK2 which is released from cells and remains enzymatically active extracellularly.</text>
</comment>
<comment type="catalytic activity">
    <reaction evidence="2">
        <text>Strict requirement for an Asp residue at position P1 and has a preferred cleavage sequence of Tyr-Val-Ala-Asp-|-.</text>
        <dbReference type="EC" id="3.4.22.36"/>
    </reaction>
</comment>
<comment type="subunit">
    <text evidence="1 2">Heterotetramer that consists of two anti-parallel arranged heterodimers, each one formed by a 20 kDa (Caspase-1 subunit p20) and a 10 kDa (Caspase-1 subunit p10) subunit. May be a component of the inflammasome, a protein complex which also includes PYCARD, CARD8 and NLRP2 and whose function would be the activation of pro-inflammatory caspases. Component of the AIM2 PANoptosome complex, a multiprotein complex that drives inflammatory cell death (PANoptosis). Both the p10 and p20 subunits interact with MEFV. Interacts with CARD17P/INCA and CARD18. Interacts with SERPINB1; this interaction regulates CASP1 activity.</text>
</comment>
<comment type="subunit">
    <molecule>Caspase-1 subunit p20</molecule>
    <text evidence="2">Heterotetramer that consists of two anti-parallel arranged heterodimers, each one formed by a 20 kDa (Caspase-1 subunit p20) and a 10 kDa (Caspase-1 subunit p10) subunit.</text>
</comment>
<comment type="subunit">
    <molecule>Caspase-1 subunit p10</molecule>
    <text evidence="2">Heterotetramer that consists of two anti-parallel arranged heterodimers, each one formed by a 20 kDa (Caspase-1 subunit p20) and a 10 kDa (Caspase-1 subunit p10) subunit.</text>
</comment>
<comment type="subcellular location">
    <subcellularLocation>
        <location evidence="2">Cytoplasm</location>
    </subcellularLocation>
    <subcellularLocation>
        <location evidence="2">Cell membrane</location>
    </subcellularLocation>
</comment>
<comment type="PTM">
    <text evidence="2">The two subunits are derived from the precursor sequence by an autocatalytic mechanism.</text>
</comment>
<comment type="PTM">
    <text evidence="2">Ubiquitinated via 'Lys-11'-linked polyubiquitination. Deubiquitinated by USP8.</text>
</comment>
<comment type="similarity">
    <text evidence="6">Belongs to the peptidase C14A family.</text>
</comment>
<accession>Q9N2I1</accession>
<gene>
    <name type="primary">CASP1</name>
    <name type="synonym">IL1BC</name>
</gene>
<dbReference type="EC" id="3.4.22.36" evidence="2"/>
<dbReference type="EMBL" id="AB027296">
    <property type="protein sequence ID" value="BAA89531.1"/>
    <property type="molecule type" value="mRNA"/>
</dbReference>
<dbReference type="RefSeq" id="NP_999327.1">
    <property type="nucleotide sequence ID" value="NM_214162.1"/>
</dbReference>
<dbReference type="SMR" id="Q9N2I1"/>
<dbReference type="FunCoup" id="Q9N2I1">
    <property type="interactions" value="292"/>
</dbReference>
<dbReference type="STRING" id="9823.ENSSSCP00000064928"/>
<dbReference type="PaxDb" id="9823-ENSSSCP00000023919"/>
<dbReference type="PeptideAtlas" id="Q9N2I1"/>
<dbReference type="GeneID" id="397319"/>
<dbReference type="KEGG" id="ssc:397319"/>
<dbReference type="CTD" id="834"/>
<dbReference type="eggNOG" id="KOG3573">
    <property type="taxonomic scope" value="Eukaryota"/>
</dbReference>
<dbReference type="InParanoid" id="Q9N2I1"/>
<dbReference type="OrthoDB" id="6097640at2759"/>
<dbReference type="BRENDA" id="3.4.22.36">
    <property type="organism ID" value="6170"/>
</dbReference>
<dbReference type="Proteomes" id="UP000008227">
    <property type="component" value="Unplaced"/>
</dbReference>
<dbReference type="Proteomes" id="UP000314985">
    <property type="component" value="Unplaced"/>
</dbReference>
<dbReference type="Proteomes" id="UP000694570">
    <property type="component" value="Unplaced"/>
</dbReference>
<dbReference type="Proteomes" id="UP000694571">
    <property type="component" value="Unplaced"/>
</dbReference>
<dbReference type="Proteomes" id="UP000694720">
    <property type="component" value="Unplaced"/>
</dbReference>
<dbReference type="Proteomes" id="UP000694722">
    <property type="component" value="Unplaced"/>
</dbReference>
<dbReference type="Proteomes" id="UP000694723">
    <property type="component" value="Unplaced"/>
</dbReference>
<dbReference type="Proteomes" id="UP000694724">
    <property type="component" value="Unplaced"/>
</dbReference>
<dbReference type="Proteomes" id="UP000694725">
    <property type="component" value="Unplaced"/>
</dbReference>
<dbReference type="Proteomes" id="UP000694726">
    <property type="component" value="Unplaced"/>
</dbReference>
<dbReference type="Proteomes" id="UP000694727">
    <property type="component" value="Unplaced"/>
</dbReference>
<dbReference type="Proteomes" id="UP000694728">
    <property type="component" value="Unplaced"/>
</dbReference>
<dbReference type="GO" id="GO:0097169">
    <property type="term" value="C:AIM2 inflammasome complex"/>
    <property type="evidence" value="ECO:0000250"/>
    <property type="project" value="UniProtKB"/>
</dbReference>
<dbReference type="GO" id="GO:0072557">
    <property type="term" value="C:IPAF inflammasome complex"/>
    <property type="evidence" value="ECO:0000250"/>
    <property type="project" value="UniProtKB"/>
</dbReference>
<dbReference type="GO" id="GO:0072558">
    <property type="term" value="C:NLRP1 inflammasome complex"/>
    <property type="evidence" value="ECO:0000250"/>
    <property type="project" value="UniProtKB"/>
</dbReference>
<dbReference type="GO" id="GO:0072559">
    <property type="term" value="C:NLRP3 inflammasome complex"/>
    <property type="evidence" value="ECO:0000250"/>
    <property type="project" value="UniProtKB"/>
</dbReference>
<dbReference type="GO" id="GO:0005886">
    <property type="term" value="C:plasma membrane"/>
    <property type="evidence" value="ECO:0007669"/>
    <property type="project" value="UniProtKB-SubCell"/>
</dbReference>
<dbReference type="GO" id="GO:0004197">
    <property type="term" value="F:cysteine-type endopeptidase activity"/>
    <property type="evidence" value="ECO:0000250"/>
    <property type="project" value="UniProtKB"/>
</dbReference>
<dbReference type="GO" id="GO:0006915">
    <property type="term" value="P:apoptotic process"/>
    <property type="evidence" value="ECO:0007669"/>
    <property type="project" value="UniProtKB-KW"/>
</dbReference>
<dbReference type="GO" id="GO:0001819">
    <property type="term" value="P:positive regulation of cytokine production"/>
    <property type="evidence" value="ECO:0000250"/>
    <property type="project" value="UniProtKB"/>
</dbReference>
<dbReference type="GO" id="GO:0032731">
    <property type="term" value="P:positive regulation of interleukin-1 beta production"/>
    <property type="evidence" value="ECO:0000250"/>
    <property type="project" value="UniProtKB"/>
</dbReference>
<dbReference type="GO" id="GO:0016540">
    <property type="term" value="P:protein autoprocessing"/>
    <property type="evidence" value="ECO:0000250"/>
    <property type="project" value="UniProtKB"/>
</dbReference>
<dbReference type="GO" id="GO:0070269">
    <property type="term" value="P:pyroptotic inflammatory response"/>
    <property type="evidence" value="ECO:0000250"/>
    <property type="project" value="UniProtKB"/>
</dbReference>
<dbReference type="GO" id="GO:0042981">
    <property type="term" value="P:regulation of apoptotic process"/>
    <property type="evidence" value="ECO:0007669"/>
    <property type="project" value="InterPro"/>
</dbReference>
<dbReference type="GO" id="GO:0050727">
    <property type="term" value="P:regulation of inflammatory response"/>
    <property type="evidence" value="ECO:0000250"/>
    <property type="project" value="UniProtKB"/>
</dbReference>
<dbReference type="CDD" id="cd08325">
    <property type="entry name" value="CARD_CASP1-like"/>
    <property type="match status" value="1"/>
</dbReference>
<dbReference type="CDD" id="cd00032">
    <property type="entry name" value="CASc"/>
    <property type="match status" value="1"/>
</dbReference>
<dbReference type="FunFam" id="1.10.533.10:FF:000031">
    <property type="entry name" value="Caspase 1, isoform CRA_b"/>
    <property type="match status" value="1"/>
</dbReference>
<dbReference type="FunFam" id="3.40.50.1460:FF:000007">
    <property type="entry name" value="Caspase-1"/>
    <property type="match status" value="1"/>
</dbReference>
<dbReference type="Gene3D" id="3.40.50.1460">
    <property type="match status" value="1"/>
</dbReference>
<dbReference type="Gene3D" id="1.10.533.10">
    <property type="entry name" value="Death Domain, Fas"/>
    <property type="match status" value="1"/>
</dbReference>
<dbReference type="InterPro" id="IPR001315">
    <property type="entry name" value="CARD"/>
</dbReference>
<dbReference type="InterPro" id="IPR029030">
    <property type="entry name" value="Caspase-like_dom_sf"/>
</dbReference>
<dbReference type="InterPro" id="IPR033139">
    <property type="entry name" value="Caspase_cys_AS"/>
</dbReference>
<dbReference type="InterPro" id="IPR016129">
    <property type="entry name" value="Caspase_his_AS"/>
</dbReference>
<dbReference type="InterPro" id="IPR011029">
    <property type="entry name" value="DEATH-like_dom_sf"/>
</dbReference>
<dbReference type="InterPro" id="IPR002398">
    <property type="entry name" value="Pept_C14"/>
</dbReference>
<dbReference type="InterPro" id="IPR011600">
    <property type="entry name" value="Pept_C14_caspase"/>
</dbReference>
<dbReference type="InterPro" id="IPR002138">
    <property type="entry name" value="Pept_C14_p10"/>
</dbReference>
<dbReference type="InterPro" id="IPR001309">
    <property type="entry name" value="Pept_C14_p20"/>
</dbReference>
<dbReference type="InterPro" id="IPR015917">
    <property type="entry name" value="Pept_C14A"/>
</dbReference>
<dbReference type="PANTHER" id="PTHR47901">
    <property type="entry name" value="CASPASE RECRUITMENT DOMAIN-CONTAINING PROTEIN 18"/>
    <property type="match status" value="1"/>
</dbReference>
<dbReference type="PANTHER" id="PTHR47901:SF3">
    <property type="entry name" value="CASPASE-1"/>
    <property type="match status" value="1"/>
</dbReference>
<dbReference type="Pfam" id="PF00619">
    <property type="entry name" value="CARD"/>
    <property type="match status" value="1"/>
</dbReference>
<dbReference type="Pfam" id="PF00656">
    <property type="entry name" value="Peptidase_C14"/>
    <property type="match status" value="1"/>
</dbReference>
<dbReference type="PIRSF" id="PIRSF038001">
    <property type="entry name" value="Caspase_ICE"/>
    <property type="match status" value="1"/>
</dbReference>
<dbReference type="PRINTS" id="PR00376">
    <property type="entry name" value="IL1BCENZYME"/>
</dbReference>
<dbReference type="SMART" id="SM00114">
    <property type="entry name" value="CARD"/>
    <property type="match status" value="1"/>
</dbReference>
<dbReference type="SMART" id="SM00115">
    <property type="entry name" value="CASc"/>
    <property type="match status" value="1"/>
</dbReference>
<dbReference type="SUPFAM" id="SSF52129">
    <property type="entry name" value="Caspase-like"/>
    <property type="match status" value="1"/>
</dbReference>
<dbReference type="SUPFAM" id="SSF47986">
    <property type="entry name" value="DEATH domain"/>
    <property type="match status" value="1"/>
</dbReference>
<dbReference type="PROSITE" id="PS50209">
    <property type="entry name" value="CARD"/>
    <property type="match status" value="1"/>
</dbReference>
<dbReference type="PROSITE" id="PS01122">
    <property type="entry name" value="CASPASE_CYS"/>
    <property type="match status" value="1"/>
</dbReference>
<dbReference type="PROSITE" id="PS01121">
    <property type="entry name" value="CASPASE_HIS"/>
    <property type="match status" value="1"/>
</dbReference>
<dbReference type="PROSITE" id="PS50207">
    <property type="entry name" value="CASPASE_P10"/>
    <property type="match status" value="1"/>
</dbReference>
<dbReference type="PROSITE" id="PS50208">
    <property type="entry name" value="CASPASE_P20"/>
    <property type="match status" value="1"/>
</dbReference>
<proteinExistence type="evidence at transcript level"/>
<evidence type="ECO:0000250" key="1">
    <source>
        <dbReference type="UniProtKB" id="P29452"/>
    </source>
</evidence>
<evidence type="ECO:0000250" key="2">
    <source>
        <dbReference type="UniProtKB" id="P29466"/>
    </source>
</evidence>
<evidence type="ECO:0000255" key="3"/>
<evidence type="ECO:0000255" key="4">
    <source>
        <dbReference type="PROSITE-ProRule" id="PRU00046"/>
    </source>
</evidence>
<evidence type="ECO:0000256" key="5">
    <source>
        <dbReference type="SAM" id="MobiDB-lite"/>
    </source>
</evidence>
<evidence type="ECO:0000305" key="6"/>